<proteinExistence type="predicted"/>
<reference key="1">
    <citation type="journal article" date="1994" name="J. Bacteriol.">
        <title>Organization of the methylamine utilization (mau) genes in Methylophilus methylotrophus W3A1-NS.</title>
        <authorList>
            <person name="Chistoserdov A.Y."/>
            <person name="McIntire W.S."/>
            <person name="Mathews F.S."/>
            <person name="Lidstrom M.E."/>
        </authorList>
    </citation>
    <scope>NUCLEOTIDE SEQUENCE [GENOMIC DNA]</scope>
</reference>
<comment type="function">
    <text>May be specifically involved in the processing, transport, and/or maturation of the MADH beta-subunit.</text>
</comment>
<comment type="pathway">
    <text>One-carbon metabolism; methylamine degradation.</text>
</comment>
<comment type="subcellular location">
    <subcellularLocation>
        <location evidence="2">Cell membrane</location>
        <topology evidence="2">Multi-pass membrane protein</topology>
    </subcellularLocation>
</comment>
<organism>
    <name type="scientific">Methylophilus methylotrophus</name>
    <name type="common">Bacterium W3A1</name>
    <dbReference type="NCBI Taxonomy" id="17"/>
    <lineage>
        <taxon>Bacteria</taxon>
        <taxon>Pseudomonadati</taxon>
        <taxon>Pseudomonadota</taxon>
        <taxon>Betaproteobacteria</taxon>
        <taxon>Nitrosomonadales</taxon>
        <taxon>Methylophilaceae</taxon>
        <taxon>Methylophilus</taxon>
    </lineage>
</organism>
<gene>
    <name type="primary">mauE</name>
</gene>
<sequence length="190" mass="20159">MESMVNDPTVAMFASLFVALVLAAAAIPKLRSQDEFLGVVANYKLLPGFLVAPFAKLLPWLELGCAIALLVPSLRVLAACVAAALFMLFSFAIAVNVGRGRTHIDCGCVRRPTSMSRIGMFHVLRALALAGMSLYVAAVPLEISGISIESALTALASAVMLSLIYMAADLMVGFPATKHKLEIYKGNSND</sequence>
<protein>
    <recommendedName>
        <fullName>Methylamine utilization protein MauE</fullName>
    </recommendedName>
</protein>
<dbReference type="EMBL" id="L26407">
    <property type="protein sequence ID" value="AAB46949.1"/>
    <property type="molecule type" value="Genomic_DNA"/>
</dbReference>
<dbReference type="PIR" id="T10071">
    <property type="entry name" value="T10071"/>
</dbReference>
<dbReference type="STRING" id="1122236.GCA_000378225_02091"/>
<dbReference type="UniPathway" id="UPA00895"/>
<dbReference type="GO" id="GO:0005886">
    <property type="term" value="C:plasma membrane"/>
    <property type="evidence" value="ECO:0007669"/>
    <property type="project" value="UniProtKB-SubCell"/>
</dbReference>
<dbReference type="GO" id="GO:0030416">
    <property type="term" value="P:methylamine metabolic process"/>
    <property type="evidence" value="ECO:0007669"/>
    <property type="project" value="InterPro"/>
</dbReference>
<dbReference type="InterPro" id="IPR009908">
    <property type="entry name" value="Methylamine_util_MauE"/>
</dbReference>
<dbReference type="Pfam" id="PF07291">
    <property type="entry name" value="MauE"/>
    <property type="match status" value="1"/>
</dbReference>
<name>MAUE_METME</name>
<keyword id="KW-1003">Cell membrane</keyword>
<keyword id="KW-0472">Membrane</keyword>
<keyword id="KW-0812">Transmembrane</keyword>
<keyword id="KW-1133">Transmembrane helix</keyword>
<feature type="chain" id="PRO_0000208934" description="Methylamine utilization protein MauE">
    <location>
        <begin position="1"/>
        <end position="190"/>
    </location>
</feature>
<feature type="transmembrane region" description="Helical" evidence="1">
    <location>
        <begin position="8"/>
        <end position="28"/>
    </location>
</feature>
<feature type="transmembrane region" description="Helical" evidence="1">
    <location>
        <begin position="49"/>
        <end position="69"/>
    </location>
</feature>
<feature type="transmembrane region" description="Helical" evidence="1">
    <location>
        <begin position="77"/>
        <end position="97"/>
    </location>
</feature>
<feature type="transmembrane region" description="Helical" evidence="1">
    <location>
        <begin position="126"/>
        <end position="146"/>
    </location>
</feature>
<feature type="transmembrane region" description="Helical" evidence="1">
    <location>
        <begin position="154"/>
        <end position="174"/>
    </location>
</feature>
<accession>Q50231</accession>
<evidence type="ECO:0000255" key="1"/>
<evidence type="ECO:0000305" key="2"/>